<dbReference type="EMBL" id="JQFZ01000029">
    <property type="protein sequence ID" value="KGO61797.1"/>
    <property type="molecule type" value="Genomic_DNA"/>
</dbReference>
<dbReference type="RefSeq" id="XP_016602495.1">
    <property type="nucleotide sequence ID" value="XM_016738978.1"/>
</dbReference>
<dbReference type="STRING" id="27334.A0A0A2K253"/>
<dbReference type="GeneID" id="27674397"/>
<dbReference type="VEuPathDB" id="FungiDB:PEXP_055790"/>
<dbReference type="HOGENOM" id="CLU_2237501_0_0_1"/>
<dbReference type="OrthoDB" id="4356068at2759"/>
<dbReference type="PhylomeDB" id="A0A0A2K253"/>
<dbReference type="Proteomes" id="UP000030143">
    <property type="component" value="Unassembled WGS sequence"/>
</dbReference>
<organism>
    <name type="scientific">Penicillium expansum</name>
    <name type="common">Blue mold rot fungus</name>
    <dbReference type="NCBI Taxonomy" id="27334"/>
    <lineage>
        <taxon>Eukaryota</taxon>
        <taxon>Fungi</taxon>
        <taxon>Dikarya</taxon>
        <taxon>Ascomycota</taxon>
        <taxon>Pezizomycotina</taxon>
        <taxon>Eurotiomycetes</taxon>
        <taxon>Eurotiomycetidae</taxon>
        <taxon>Eurotiales</taxon>
        <taxon>Aspergillaceae</taxon>
        <taxon>Penicillium</taxon>
    </lineage>
</organism>
<evidence type="ECO:0000250" key="1">
    <source>
        <dbReference type="UniProtKB" id="P52754"/>
    </source>
</evidence>
<evidence type="ECO:0000255" key="2"/>
<evidence type="ECO:0000269" key="3">
    <source>
    </source>
</evidence>
<evidence type="ECO:0000303" key="4">
    <source>
    </source>
</evidence>
<evidence type="ECO:0000305" key="5">
    <source>
    </source>
</evidence>
<name>HFBD_PENEN</name>
<proteinExistence type="inferred from homology"/>
<comment type="function">
    <text evidence="3 5">Aerial growth, conidiation, and dispersal of filamentous fungi in the environment rely upon a capability of their secreting small amphipathic proteins called hydrophobins (HPBs) with low sequence identity. Class I can self-assemble into an outermost layer of rodlet bundles on aerial cell surfaces, conferring cellular hydrophobicity that supports fungal growth, development and dispersal; whereas Class II form highly ordered films at water-air interfaces through intermolecular interactions but contribute nothing to the rodlet structure (Probable). In P.expansum, hydrophobins contribute to germination, tolerance to cold stress and mycotoxins patulin and citrinin production (PubMed:36374077).</text>
</comment>
<comment type="subcellular location">
    <subcellularLocation>
        <location evidence="5">Secreted</location>
    </subcellularLocation>
    <subcellularLocation>
        <location evidence="5">Secreted</location>
        <location evidence="5">Cell wall</location>
    </subcellularLocation>
</comment>
<comment type="disruption phenotype">
    <text evidence="3">Affects hydrophobicity only when HfbC, HfbE and HfbF are also deleted (PubMed:36374077). Disruption of all 7 hydrophobins leads to altered germination kinetics, decreased survival under exposure to extreme cold stress and increased mycotoxins patulin and citrinin production (PubMed:36374077).</text>
</comment>
<gene>
    <name evidence="4" type="primary">HfbD</name>
    <name type="ORF">PEX2_017030</name>
</gene>
<accession>A0A0A2K253</accession>
<sequence length="105" mass="11030">MKFYIVLLALAAFAMAEADPNLEARAGCSQKGKYCNGGTFLCCPGQGSCKGNQIAKKKYSASEAPSTEGVQRLLLVTGYALECLGCLFSQTPGYSGSVLPLLNSH</sequence>
<feature type="signal peptide" evidence="2">
    <location>
        <begin position="1"/>
        <end position="18"/>
    </location>
</feature>
<feature type="chain" id="PRO_5009752762" description="Unclassified hydrophobin D">
    <location>
        <begin position="19"/>
        <end position="105"/>
    </location>
</feature>
<feature type="disulfide bond" evidence="1">
    <location>
        <begin position="35"/>
        <end position="86"/>
    </location>
</feature>
<feature type="disulfide bond" evidence="1">
    <location>
        <begin position="42"/>
        <end position="83"/>
    </location>
</feature>
<feature type="disulfide bond" evidence="1">
    <location>
        <begin position="43"/>
        <end position="49"/>
    </location>
</feature>
<protein>
    <recommendedName>
        <fullName evidence="4">Unclassified hydrophobin D</fullName>
    </recommendedName>
</protein>
<reference key="1">
    <citation type="journal article" date="2015" name="Mol. Plant Microbe Interact.">
        <title>Genome, transcriptome, and functional analyses of Penicillium expansum provide new insights into secondary metabolism and pathogenicity.</title>
        <authorList>
            <person name="Ballester A.R."/>
            <person name="Marcet-Houben M."/>
            <person name="Levin E."/>
            <person name="Sela N."/>
            <person name="Selma-Lazaro C."/>
            <person name="Carmona L."/>
            <person name="Wisniewski M."/>
            <person name="Droby S."/>
            <person name="Gonzalez-Candelas L."/>
            <person name="Gabaldon T."/>
        </authorList>
    </citation>
    <scope>NUCLEOTIDE SEQUENCE [LARGE SCALE GENOMIC DNA]</scope>
    <source>
        <strain>MD-8</strain>
    </source>
</reference>
<reference key="2">
    <citation type="journal article" date="2022" name="MBio">
        <title>The Hydrophobin Gene Family Confers a Fitness Trade-off between Spore Dispersal and Host Colonization in Penicillium expansum.</title>
        <authorList>
            <person name="Luciano-Rosario D."/>
            <person name="Eagan J.L."/>
            <person name="Aryal N."/>
            <person name="Dominguez E.G."/>
            <person name="Hull C.M."/>
            <person name="Keller N.P."/>
        </authorList>
    </citation>
    <scope>FUNCTION</scope>
    <scope>DISRUPTION PHENOTYPE</scope>
</reference>
<keyword id="KW-0134">Cell wall</keyword>
<keyword id="KW-1015">Disulfide bond</keyword>
<keyword id="KW-1185">Reference proteome</keyword>
<keyword id="KW-0964">Secreted</keyword>
<keyword id="KW-0732">Signal</keyword>